<keyword id="KW-0067">ATP-binding</keyword>
<keyword id="KW-0963">Cytoplasm</keyword>
<keyword id="KW-0547">Nucleotide-binding</keyword>
<keyword id="KW-0653">Protein transport</keyword>
<keyword id="KW-1185">Reference proteome</keyword>
<keyword id="KW-1278">Translocase</keyword>
<keyword id="KW-0813">Transport</keyword>
<keyword id="KW-0843">Virulence</keyword>
<reference key="1">
    <citation type="journal article" date="2000" name="Proc. Natl. Acad. Sci. U.S.A.">
        <title>The Pseudomonas syringae Hrp pathogenicity island has a tripartite mosaic structure composed of a cluster of type III secretion genes bounded by exchangeable effector and conserved effector loci that contribute to parasitic fitness and pathogenicity in plants.</title>
        <authorList>
            <person name="Alfano J.R."/>
            <person name="Charkowski A.O."/>
            <person name="Deng W.-L."/>
            <person name="Badel J.L."/>
            <person name="Petnicki-Ocwieja T."/>
            <person name="van Dijk K."/>
            <person name="Collmer A."/>
        </authorList>
    </citation>
    <scope>NUCLEOTIDE SEQUENCE [GENOMIC DNA]</scope>
    <source>
        <strain>ATCC BAA-871 / DC3000</strain>
    </source>
</reference>
<reference key="2">
    <citation type="journal article" date="2003" name="Proc. Natl. Acad. Sci. U.S.A.">
        <title>The complete genome sequence of the Arabidopsis and tomato pathogen Pseudomonas syringae pv. tomato DC3000.</title>
        <authorList>
            <person name="Buell C.R."/>
            <person name="Joardar V."/>
            <person name="Lindeberg M."/>
            <person name="Selengut J."/>
            <person name="Paulsen I.T."/>
            <person name="Gwinn M.L."/>
            <person name="Dodson R.J."/>
            <person name="DeBoy R.T."/>
            <person name="Durkin A.S."/>
            <person name="Kolonay J.F."/>
            <person name="Madupu R."/>
            <person name="Daugherty S.C."/>
            <person name="Brinkac L.M."/>
            <person name="Beanan M.J."/>
            <person name="Haft D.H."/>
            <person name="Nelson W.C."/>
            <person name="Davidsen T.M."/>
            <person name="Zafar N."/>
            <person name="Zhou L."/>
            <person name="Liu J."/>
            <person name="Yuan Q."/>
            <person name="Khouri H.M."/>
            <person name="Fedorova N.B."/>
            <person name="Tran B."/>
            <person name="Russell D."/>
            <person name="Berry K.J."/>
            <person name="Utterback T.R."/>
            <person name="Van Aken S.E."/>
            <person name="Feldblyum T.V."/>
            <person name="D'Ascenzo M."/>
            <person name="Deng W.-L."/>
            <person name="Ramos A.R."/>
            <person name="Alfano J.R."/>
            <person name="Cartinhour S."/>
            <person name="Chatterjee A.K."/>
            <person name="Delaney T.P."/>
            <person name="Lazarowitz S.G."/>
            <person name="Martin G.B."/>
            <person name="Schneider D.J."/>
            <person name="Tang X."/>
            <person name="Bender C.L."/>
            <person name="White O."/>
            <person name="Fraser C.M."/>
            <person name="Collmer A."/>
        </authorList>
    </citation>
    <scope>NUCLEOTIDE SEQUENCE [LARGE SCALE GENOMIC DNA]</scope>
    <source>
        <strain>ATCC BAA-871 / DC3000</strain>
    </source>
</reference>
<feature type="chain" id="PRO_0000144702" description="Type 3 secretion system ATPase">
    <location>
        <begin position="1"/>
        <end position="449"/>
    </location>
</feature>
<feature type="binding site" evidence="2">
    <location>
        <begin position="178"/>
        <end position="183"/>
    </location>
    <ligand>
        <name>ATP</name>
        <dbReference type="ChEBI" id="CHEBI:30616"/>
    </ligand>
</feature>
<gene>
    <name evidence="3" type="primary">sctN</name>
    <name type="synonym">hrcN</name>
    <name type="ordered locus">PSPTO_1400</name>
</gene>
<accession>Q887B5</accession>
<accession>Q9F0H7</accession>
<sequence length="449" mass="48368">MNAALNQWKDTHAARLSQYSAVRVSGRVSAVRGILLECKIPAAKVGDLCEVSKADGSFLLAEIVGFTQECTLLSALGAPDGIQVGAPIRPLGIAHRIGVDDTLLGCVLDGFGRPLLGDCLGAFAGPDDRRDTLPVIADALPPTQRPRITRSLPTGIRAIDSAILLGEGQRVGLFAGAGCGKTTLMAELARNMDCDVIVFGLIGERGRELREFLDHELDETLRARSVLVCATSDRSSMERARAAFTATAIAEAFRARGQKVLLLLDSLTRFARAQREIGIASGEPLGRGGLPPSVYTLLPRLVERAGMSENGSITALYTVLIEQDSMNDPVADEVRSLLDGHIVLSRKLAERGHYPAIDVSASISRILSNVTGRDHQRANNRLRQLLAAYKQVEMLLRLGEYQAGADPVTDCAVQLNDAINAFLRQDLREPVPLQETLDGLLRITSQLPE</sequence>
<dbReference type="EC" id="7.4.2.8" evidence="4"/>
<dbReference type="EMBL" id="AF232004">
    <property type="protein sequence ID" value="AAG33879.1"/>
    <property type="status" value="ALT_INIT"/>
    <property type="molecule type" value="Genomic_DNA"/>
</dbReference>
<dbReference type="EMBL" id="AE016853">
    <property type="protein sequence ID" value="AAO54922.1"/>
    <property type="molecule type" value="Genomic_DNA"/>
</dbReference>
<dbReference type="RefSeq" id="NP_791227.1">
    <property type="nucleotide sequence ID" value="NC_004578.1"/>
</dbReference>
<dbReference type="RefSeq" id="WP_005763862.1">
    <property type="nucleotide sequence ID" value="NC_004578.1"/>
</dbReference>
<dbReference type="SMR" id="Q887B5"/>
<dbReference type="STRING" id="223283.PSPTO_1400"/>
<dbReference type="GeneID" id="1183036"/>
<dbReference type="KEGG" id="pst:PSPTO_1400"/>
<dbReference type="PATRIC" id="fig|223283.9.peg.1422"/>
<dbReference type="eggNOG" id="COG1157">
    <property type="taxonomic scope" value="Bacteria"/>
</dbReference>
<dbReference type="HOGENOM" id="CLU_022398_5_1_6"/>
<dbReference type="OrthoDB" id="9148544at2"/>
<dbReference type="PhylomeDB" id="Q887B5"/>
<dbReference type="Proteomes" id="UP000002515">
    <property type="component" value="Chromosome"/>
</dbReference>
<dbReference type="GO" id="GO:0005737">
    <property type="term" value="C:cytoplasm"/>
    <property type="evidence" value="ECO:0007669"/>
    <property type="project" value="UniProtKB-SubCell"/>
</dbReference>
<dbReference type="GO" id="GO:0030257">
    <property type="term" value="C:type III protein secretion system complex"/>
    <property type="evidence" value="ECO:0007669"/>
    <property type="project" value="InterPro"/>
</dbReference>
<dbReference type="GO" id="GO:0005524">
    <property type="term" value="F:ATP binding"/>
    <property type="evidence" value="ECO:0007669"/>
    <property type="project" value="UniProtKB-KW"/>
</dbReference>
<dbReference type="GO" id="GO:0016887">
    <property type="term" value="F:ATP hydrolysis activity"/>
    <property type="evidence" value="ECO:0007669"/>
    <property type="project" value="InterPro"/>
</dbReference>
<dbReference type="GO" id="GO:0008564">
    <property type="term" value="F:protein-exporting ATPase activity"/>
    <property type="evidence" value="ECO:0007669"/>
    <property type="project" value="UniProtKB-EC"/>
</dbReference>
<dbReference type="GO" id="GO:0046933">
    <property type="term" value="F:proton-transporting ATP synthase activity, rotational mechanism"/>
    <property type="evidence" value="ECO:0007669"/>
    <property type="project" value="TreeGrafter"/>
</dbReference>
<dbReference type="GO" id="GO:0030254">
    <property type="term" value="P:protein secretion by the type III secretion system"/>
    <property type="evidence" value="ECO:0007669"/>
    <property type="project" value="InterPro"/>
</dbReference>
<dbReference type="CDD" id="cd18117">
    <property type="entry name" value="ATP-synt_flagellum-secretory_path_III_N"/>
    <property type="match status" value="1"/>
</dbReference>
<dbReference type="CDD" id="cd01136">
    <property type="entry name" value="ATPase_flagellum-secretory_path_III"/>
    <property type="match status" value="1"/>
</dbReference>
<dbReference type="FunFam" id="3.40.50.12240:FF:000002">
    <property type="entry name" value="Flagellum-specific ATP synthase FliI"/>
    <property type="match status" value="1"/>
</dbReference>
<dbReference type="Gene3D" id="3.40.50.12240">
    <property type="match status" value="1"/>
</dbReference>
<dbReference type="InterPro" id="IPR003593">
    <property type="entry name" value="AAA+_ATPase"/>
</dbReference>
<dbReference type="InterPro" id="IPR020003">
    <property type="entry name" value="ATPase_a/bsu_AS"/>
</dbReference>
<dbReference type="InterPro" id="IPR050053">
    <property type="entry name" value="ATPase_alpha/beta_chains"/>
</dbReference>
<dbReference type="InterPro" id="IPR004100">
    <property type="entry name" value="ATPase_F1/V1/A1_a/bsu_N"/>
</dbReference>
<dbReference type="InterPro" id="IPR000194">
    <property type="entry name" value="ATPase_F1/V1/A1_a/bsu_nucl-bd"/>
</dbReference>
<dbReference type="InterPro" id="IPR005714">
    <property type="entry name" value="ATPase_T3SS_FliI/YscN"/>
</dbReference>
<dbReference type="InterPro" id="IPR027417">
    <property type="entry name" value="P-loop_NTPase"/>
</dbReference>
<dbReference type="InterPro" id="IPR040627">
    <property type="entry name" value="T3SS_ATPase_C"/>
</dbReference>
<dbReference type="NCBIfam" id="TIGR01026">
    <property type="entry name" value="fliI_yscN"/>
    <property type="match status" value="1"/>
</dbReference>
<dbReference type="PANTHER" id="PTHR15184">
    <property type="entry name" value="ATP SYNTHASE"/>
    <property type="match status" value="1"/>
</dbReference>
<dbReference type="PANTHER" id="PTHR15184:SF9">
    <property type="entry name" value="SPI-1 TYPE 3 SECRETION SYSTEM ATPASE"/>
    <property type="match status" value="1"/>
</dbReference>
<dbReference type="Pfam" id="PF00006">
    <property type="entry name" value="ATP-synt_ab"/>
    <property type="match status" value="1"/>
</dbReference>
<dbReference type="Pfam" id="PF02874">
    <property type="entry name" value="ATP-synt_ab_N"/>
    <property type="match status" value="1"/>
</dbReference>
<dbReference type="Pfam" id="PF18269">
    <property type="entry name" value="T3SS_ATPase_C"/>
    <property type="match status" value="1"/>
</dbReference>
<dbReference type="SMART" id="SM00382">
    <property type="entry name" value="AAA"/>
    <property type="match status" value="1"/>
</dbReference>
<dbReference type="SUPFAM" id="SSF52540">
    <property type="entry name" value="P-loop containing nucleoside triphosphate hydrolases"/>
    <property type="match status" value="1"/>
</dbReference>
<dbReference type="PROSITE" id="PS00152">
    <property type="entry name" value="ATPASE_ALPHA_BETA"/>
    <property type="match status" value="1"/>
</dbReference>
<proteinExistence type="inferred from homology"/>
<comment type="function">
    <text evidence="1 2 4">ATPase component of the type III secretion system (T3SS), also called injectisome, which is used to inject bacterial effector proteins into eukaryotic host cells (By similarity). Acts as a molecular motor to provide the energy that is required for the export of proteins (By similarity). Required for type III secretion apparatus (T3SA) formation, proper protein secretion, host cell invasion and virulence (By similarity). May play a critical role in T3SS substrate recognition, disassembly of the effector/chaperone complex and unfolding of the effector in an ATP-dependent manner prior to secretion (By similarity).</text>
</comment>
<comment type="catalytic activity">
    <reaction evidence="4">
        <text>ATP + H2O + cellular proteinSide 1 = ADP + phosphate + cellular proteinSide 2.</text>
        <dbReference type="EC" id="7.4.2.8"/>
    </reaction>
</comment>
<comment type="subunit">
    <text evidence="3 4">The core secretion machinery of the T3SS is composed of approximately 20 different proteins, including cytoplasmic components, a base, an export apparatus and a needle (By similarity). This subunit is part of the cytosolic complex (By similarity). Forms homododecamers (By similarity).</text>
</comment>
<comment type="subcellular location">
    <subcellularLocation>
        <location evidence="4">Cytoplasm</location>
    </subcellularLocation>
</comment>
<comment type="similarity">
    <text evidence="5">Belongs to the ATPase alpha/beta chains family. T3SS ATPase subfamily.</text>
</comment>
<comment type="sequence caution" evidence="5">
    <conflict type="erroneous initiation">
        <sequence resource="EMBL-CDS" id="AAG33879"/>
    </conflict>
</comment>
<name>SCTN_PSESM</name>
<protein>
    <recommendedName>
        <fullName evidence="4">Type 3 secretion system ATPase</fullName>
        <shortName evidence="4">T3SS ATPase</shortName>
        <ecNumber evidence="4">7.4.2.8</ecNumber>
    </recommendedName>
</protein>
<evidence type="ECO:0000250" key="1">
    <source>
        <dbReference type="UniProtKB" id="P0A1B9"/>
    </source>
</evidence>
<evidence type="ECO:0000250" key="2">
    <source>
        <dbReference type="UniProtKB" id="P0A1C1"/>
    </source>
</evidence>
<evidence type="ECO:0000250" key="3">
    <source>
        <dbReference type="UniProtKB" id="Q52371"/>
    </source>
</evidence>
<evidence type="ECO:0000250" key="4">
    <source>
        <dbReference type="UniProtKB" id="Q8RK01"/>
    </source>
</evidence>
<evidence type="ECO:0000305" key="5"/>
<organism>
    <name type="scientific">Pseudomonas syringae pv. tomato (strain ATCC BAA-871 / DC3000)</name>
    <dbReference type="NCBI Taxonomy" id="223283"/>
    <lineage>
        <taxon>Bacteria</taxon>
        <taxon>Pseudomonadati</taxon>
        <taxon>Pseudomonadota</taxon>
        <taxon>Gammaproteobacteria</taxon>
        <taxon>Pseudomonadales</taxon>
        <taxon>Pseudomonadaceae</taxon>
        <taxon>Pseudomonas</taxon>
    </lineage>
</organism>